<keyword id="KW-0001">2Fe-2S</keyword>
<keyword id="KW-0028">Amino-acid biosynthesis</keyword>
<keyword id="KW-0100">Branched-chain amino acid biosynthesis</keyword>
<keyword id="KW-0408">Iron</keyword>
<keyword id="KW-0411">Iron-sulfur</keyword>
<keyword id="KW-0456">Lyase</keyword>
<keyword id="KW-0460">Magnesium</keyword>
<keyword id="KW-0479">Metal-binding</keyword>
<comment type="function">
    <text evidence="1">Functions in the biosynthesis of branched-chain amino acids. Catalyzes the dehydration of (2R,3R)-2,3-dihydroxy-3-methylpentanoate (2,3-dihydroxy-3-methylvalerate) into 2-oxo-3-methylpentanoate (2-oxo-3-methylvalerate) and of (2R)-2,3-dihydroxy-3-methylbutanoate (2,3-dihydroxyisovalerate) into 2-oxo-3-methylbutanoate (2-oxoisovalerate), the penultimate precursor to L-isoleucine and L-valine, respectively.</text>
</comment>
<comment type="catalytic activity">
    <reaction evidence="1">
        <text>(2R)-2,3-dihydroxy-3-methylbutanoate = 3-methyl-2-oxobutanoate + H2O</text>
        <dbReference type="Rhea" id="RHEA:24809"/>
        <dbReference type="ChEBI" id="CHEBI:11851"/>
        <dbReference type="ChEBI" id="CHEBI:15377"/>
        <dbReference type="ChEBI" id="CHEBI:49072"/>
        <dbReference type="EC" id="4.2.1.9"/>
    </reaction>
    <physiologicalReaction direction="left-to-right" evidence="1">
        <dbReference type="Rhea" id="RHEA:24810"/>
    </physiologicalReaction>
</comment>
<comment type="catalytic activity">
    <reaction evidence="1">
        <text>(2R,3R)-2,3-dihydroxy-3-methylpentanoate = (S)-3-methyl-2-oxopentanoate + H2O</text>
        <dbReference type="Rhea" id="RHEA:27694"/>
        <dbReference type="ChEBI" id="CHEBI:15377"/>
        <dbReference type="ChEBI" id="CHEBI:35146"/>
        <dbReference type="ChEBI" id="CHEBI:49258"/>
        <dbReference type="EC" id="4.2.1.9"/>
    </reaction>
    <physiologicalReaction direction="left-to-right" evidence="1">
        <dbReference type="Rhea" id="RHEA:27695"/>
    </physiologicalReaction>
</comment>
<comment type="cofactor">
    <cofactor evidence="1">
        <name>[2Fe-2S] cluster</name>
        <dbReference type="ChEBI" id="CHEBI:190135"/>
    </cofactor>
    <text evidence="1">Binds 1 [2Fe-2S] cluster per subunit. This cluster acts as a Lewis acid cofactor.</text>
</comment>
<comment type="cofactor">
    <cofactor evidence="1">
        <name>Mg(2+)</name>
        <dbReference type="ChEBI" id="CHEBI:18420"/>
    </cofactor>
</comment>
<comment type="pathway">
    <text evidence="1">Amino-acid biosynthesis; L-isoleucine biosynthesis; L-isoleucine from 2-oxobutanoate: step 3/4.</text>
</comment>
<comment type="pathway">
    <text evidence="1">Amino-acid biosynthesis; L-valine biosynthesis; L-valine from pyruvate: step 3/4.</text>
</comment>
<comment type="subunit">
    <text evidence="1">Homodimer.</text>
</comment>
<comment type="similarity">
    <text evidence="1">Belongs to the IlvD/Edd family.</text>
</comment>
<proteinExistence type="inferred from homology"/>
<protein>
    <recommendedName>
        <fullName evidence="1">Dihydroxy-acid dehydratase</fullName>
        <shortName evidence="1">DAD</shortName>
        <ecNumber evidence="1">4.2.1.9</ecNumber>
    </recommendedName>
</protein>
<sequence>MNKLRSSAITQGVQRSPNRSMLRAVGFSDDDFTKPIIGVANGYSTITPCNMGLNKLALKAEDSIRKSGGMPQMFGTITVSDGISMGTEGMKYSLVSREVIADSIETACNAQSMDGVLAIGGCDKNMPGAMIAIARMNIPSIFIYGGTIKPGKLNGEDLTVVSAFEAVGQLTSGKINEKRLNEVEKNCIPGAGSCGGMFTANTMSAVIEVLGLSLPHSSTMAAEDYEKVVSAEKSAEILVDAIKKDIRPLDLMTKESFENAISVIMAIGGSTNAVLHILAIANTAGIEINIDDFERIRQKVPVICDLKPSGRYVTVDLHNAGGIPQVMKILLNAGLINGDCKNIEGKTISEYLLNIPDNPPENQNVIRNINNPLYKKGHLAILKGNLASEGCVAKISGVKNPVLKGPARIFESEEDCLKSILNNDIKAGNVVVIRNEGPVGGPGMREMLAPTSAIVGQGLGEKVALITDGRFSGGTYGLVVGHIAPEAAVGGNIALIREGDLITVDAVNQLIEVELSDGELEKRRINWIKPIPKYKKGVLSKYSRIVSTSSLGAVTDLEK</sequence>
<feature type="chain" id="PRO_1000001029" description="Dihydroxy-acid dehydratase">
    <location>
        <begin position="1"/>
        <end position="559"/>
    </location>
</feature>
<feature type="active site" description="Proton acceptor" evidence="1">
    <location>
        <position position="472"/>
    </location>
</feature>
<feature type="binding site" evidence="1">
    <location>
        <position position="49"/>
    </location>
    <ligand>
        <name>[2Fe-2S] cluster</name>
        <dbReference type="ChEBI" id="CHEBI:190135"/>
    </ligand>
</feature>
<feature type="binding site" evidence="1">
    <location>
        <position position="81"/>
    </location>
    <ligand>
        <name>Mg(2+)</name>
        <dbReference type="ChEBI" id="CHEBI:18420"/>
    </ligand>
</feature>
<feature type="binding site" evidence="1">
    <location>
        <position position="122"/>
    </location>
    <ligand>
        <name>[2Fe-2S] cluster</name>
        <dbReference type="ChEBI" id="CHEBI:190135"/>
    </ligand>
</feature>
<feature type="binding site" evidence="1">
    <location>
        <position position="123"/>
    </location>
    <ligand>
        <name>Mg(2+)</name>
        <dbReference type="ChEBI" id="CHEBI:18420"/>
    </ligand>
</feature>
<feature type="binding site" description="via carbamate group" evidence="1">
    <location>
        <position position="124"/>
    </location>
    <ligand>
        <name>Mg(2+)</name>
        <dbReference type="ChEBI" id="CHEBI:18420"/>
    </ligand>
</feature>
<feature type="binding site" evidence="1">
    <location>
        <position position="194"/>
    </location>
    <ligand>
        <name>[2Fe-2S] cluster</name>
        <dbReference type="ChEBI" id="CHEBI:190135"/>
    </ligand>
</feature>
<feature type="binding site" evidence="1">
    <location>
        <position position="446"/>
    </location>
    <ligand>
        <name>Mg(2+)</name>
        <dbReference type="ChEBI" id="CHEBI:18420"/>
    </ligand>
</feature>
<feature type="modified residue" description="N6-carboxylysine" evidence="1">
    <location>
        <position position="124"/>
    </location>
</feature>
<gene>
    <name evidence="1" type="primary">ilvD</name>
    <name type="ordered locus">P9515_08091</name>
</gene>
<name>ILVD_PROM5</name>
<dbReference type="EC" id="4.2.1.9" evidence="1"/>
<dbReference type="EMBL" id="CP000552">
    <property type="protein sequence ID" value="ABM72018.1"/>
    <property type="molecule type" value="Genomic_DNA"/>
</dbReference>
<dbReference type="RefSeq" id="WP_011820123.1">
    <property type="nucleotide sequence ID" value="NC_008817.1"/>
</dbReference>
<dbReference type="SMR" id="A2BW57"/>
<dbReference type="STRING" id="167542.P9515_08091"/>
<dbReference type="GeneID" id="60202076"/>
<dbReference type="KEGG" id="pmc:P9515_08091"/>
<dbReference type="eggNOG" id="COG0129">
    <property type="taxonomic scope" value="Bacteria"/>
</dbReference>
<dbReference type="HOGENOM" id="CLU_014271_4_2_3"/>
<dbReference type="OrthoDB" id="9807077at2"/>
<dbReference type="UniPathway" id="UPA00047">
    <property type="reaction ID" value="UER00057"/>
</dbReference>
<dbReference type="UniPathway" id="UPA00049">
    <property type="reaction ID" value="UER00061"/>
</dbReference>
<dbReference type="Proteomes" id="UP000001589">
    <property type="component" value="Chromosome"/>
</dbReference>
<dbReference type="GO" id="GO:0051537">
    <property type="term" value="F:2 iron, 2 sulfur cluster binding"/>
    <property type="evidence" value="ECO:0007669"/>
    <property type="project" value="UniProtKB-UniRule"/>
</dbReference>
<dbReference type="GO" id="GO:0004160">
    <property type="term" value="F:dihydroxy-acid dehydratase activity"/>
    <property type="evidence" value="ECO:0007669"/>
    <property type="project" value="UniProtKB-UniRule"/>
</dbReference>
<dbReference type="GO" id="GO:0000287">
    <property type="term" value="F:magnesium ion binding"/>
    <property type="evidence" value="ECO:0007669"/>
    <property type="project" value="UniProtKB-UniRule"/>
</dbReference>
<dbReference type="GO" id="GO:0009097">
    <property type="term" value="P:isoleucine biosynthetic process"/>
    <property type="evidence" value="ECO:0007669"/>
    <property type="project" value="UniProtKB-UniRule"/>
</dbReference>
<dbReference type="GO" id="GO:0009099">
    <property type="term" value="P:L-valine biosynthetic process"/>
    <property type="evidence" value="ECO:0007669"/>
    <property type="project" value="UniProtKB-UniRule"/>
</dbReference>
<dbReference type="FunFam" id="3.50.30.80:FF:000001">
    <property type="entry name" value="Dihydroxy-acid dehydratase"/>
    <property type="match status" value="1"/>
</dbReference>
<dbReference type="Gene3D" id="3.50.30.80">
    <property type="entry name" value="IlvD/EDD C-terminal domain-like"/>
    <property type="match status" value="1"/>
</dbReference>
<dbReference type="HAMAP" id="MF_00012">
    <property type="entry name" value="IlvD"/>
    <property type="match status" value="1"/>
</dbReference>
<dbReference type="InterPro" id="IPR050165">
    <property type="entry name" value="DHAD_IlvD/Edd"/>
</dbReference>
<dbReference type="InterPro" id="IPR042096">
    <property type="entry name" value="Dihydro-acid_dehy_C"/>
</dbReference>
<dbReference type="InterPro" id="IPR004404">
    <property type="entry name" value="DihydroxyA_deHydtase"/>
</dbReference>
<dbReference type="InterPro" id="IPR020558">
    <property type="entry name" value="DiOHA_6PGluconate_deHydtase_CS"/>
</dbReference>
<dbReference type="InterPro" id="IPR056740">
    <property type="entry name" value="ILV_EDD_C"/>
</dbReference>
<dbReference type="InterPro" id="IPR000581">
    <property type="entry name" value="ILV_EDD_N"/>
</dbReference>
<dbReference type="InterPro" id="IPR037237">
    <property type="entry name" value="IlvD/EDD_N"/>
</dbReference>
<dbReference type="NCBIfam" id="TIGR00110">
    <property type="entry name" value="ilvD"/>
    <property type="match status" value="1"/>
</dbReference>
<dbReference type="NCBIfam" id="NF002068">
    <property type="entry name" value="PRK00911.1"/>
    <property type="match status" value="1"/>
</dbReference>
<dbReference type="PANTHER" id="PTHR21000">
    <property type="entry name" value="DIHYDROXY-ACID DEHYDRATASE DAD"/>
    <property type="match status" value="1"/>
</dbReference>
<dbReference type="PANTHER" id="PTHR21000:SF5">
    <property type="entry name" value="DIHYDROXY-ACID DEHYDRATASE, MITOCHONDRIAL"/>
    <property type="match status" value="1"/>
</dbReference>
<dbReference type="Pfam" id="PF24877">
    <property type="entry name" value="ILV_EDD_C"/>
    <property type="match status" value="1"/>
</dbReference>
<dbReference type="Pfam" id="PF00920">
    <property type="entry name" value="ILVD_EDD_N"/>
    <property type="match status" value="1"/>
</dbReference>
<dbReference type="SUPFAM" id="SSF143975">
    <property type="entry name" value="IlvD/EDD N-terminal domain-like"/>
    <property type="match status" value="1"/>
</dbReference>
<dbReference type="SUPFAM" id="SSF52016">
    <property type="entry name" value="LeuD/IlvD-like"/>
    <property type="match status" value="1"/>
</dbReference>
<dbReference type="PROSITE" id="PS00886">
    <property type="entry name" value="ILVD_EDD_1"/>
    <property type="match status" value="1"/>
</dbReference>
<dbReference type="PROSITE" id="PS00887">
    <property type="entry name" value="ILVD_EDD_2"/>
    <property type="match status" value="1"/>
</dbReference>
<organism>
    <name type="scientific">Prochlorococcus marinus (strain MIT 9515)</name>
    <dbReference type="NCBI Taxonomy" id="167542"/>
    <lineage>
        <taxon>Bacteria</taxon>
        <taxon>Bacillati</taxon>
        <taxon>Cyanobacteriota</taxon>
        <taxon>Cyanophyceae</taxon>
        <taxon>Synechococcales</taxon>
        <taxon>Prochlorococcaceae</taxon>
        <taxon>Prochlorococcus</taxon>
    </lineage>
</organism>
<accession>A2BW57</accession>
<reference key="1">
    <citation type="journal article" date="2007" name="PLoS Genet.">
        <title>Patterns and implications of gene gain and loss in the evolution of Prochlorococcus.</title>
        <authorList>
            <person name="Kettler G.C."/>
            <person name="Martiny A.C."/>
            <person name="Huang K."/>
            <person name="Zucker J."/>
            <person name="Coleman M.L."/>
            <person name="Rodrigue S."/>
            <person name="Chen F."/>
            <person name="Lapidus A."/>
            <person name="Ferriera S."/>
            <person name="Johnson J."/>
            <person name="Steglich C."/>
            <person name="Church G.M."/>
            <person name="Richardson P."/>
            <person name="Chisholm S.W."/>
        </authorList>
    </citation>
    <scope>NUCLEOTIDE SEQUENCE [LARGE SCALE GENOMIC DNA]</scope>
    <source>
        <strain>MIT 9515</strain>
    </source>
</reference>
<evidence type="ECO:0000255" key="1">
    <source>
        <dbReference type="HAMAP-Rule" id="MF_00012"/>
    </source>
</evidence>